<proteinExistence type="inferred from homology"/>
<organism>
    <name type="scientific">Brucella ovis (strain ATCC 25840 / 63/290 / NCTC 10512)</name>
    <dbReference type="NCBI Taxonomy" id="444178"/>
    <lineage>
        <taxon>Bacteria</taxon>
        <taxon>Pseudomonadati</taxon>
        <taxon>Pseudomonadota</taxon>
        <taxon>Alphaproteobacteria</taxon>
        <taxon>Hyphomicrobiales</taxon>
        <taxon>Brucellaceae</taxon>
        <taxon>Brucella/Ochrobactrum group</taxon>
        <taxon>Brucella</taxon>
    </lineage>
</organism>
<evidence type="ECO:0000255" key="1">
    <source>
        <dbReference type="HAMAP-Rule" id="MF_00181"/>
    </source>
</evidence>
<accession>A5VPM3</accession>
<reference key="1">
    <citation type="journal article" date="2009" name="PLoS ONE">
        <title>Genome degradation in Brucella ovis corresponds with narrowing of its host range and tissue tropism.</title>
        <authorList>
            <person name="Tsolis R.M."/>
            <person name="Seshadri R."/>
            <person name="Santos R.L."/>
            <person name="Sangari F.J."/>
            <person name="Lobo J.M."/>
            <person name="de Jong M.F."/>
            <person name="Ren Q."/>
            <person name="Myers G."/>
            <person name="Brinkac L.M."/>
            <person name="Nelson W.C."/>
            <person name="Deboy R.T."/>
            <person name="Angiuoli S."/>
            <person name="Khouri H."/>
            <person name="Dimitrov G."/>
            <person name="Robinson J.R."/>
            <person name="Mulligan S."/>
            <person name="Walker R.L."/>
            <person name="Elzer P.E."/>
            <person name="Hassan K.A."/>
            <person name="Paulsen I.T."/>
        </authorList>
    </citation>
    <scope>NUCLEOTIDE SEQUENCE [LARGE SCALE GENOMIC DNA]</scope>
    <source>
        <strain>ATCC 25840 / 63/290 / NCTC 10512</strain>
    </source>
</reference>
<feature type="chain" id="PRO_1000019888" description="Probable cytosol aminopeptidase">
    <location>
        <begin position="1"/>
        <end position="497"/>
    </location>
</feature>
<feature type="active site" evidence="1">
    <location>
        <position position="275"/>
    </location>
</feature>
<feature type="active site" evidence="1">
    <location>
        <position position="349"/>
    </location>
</feature>
<feature type="binding site" evidence="1">
    <location>
        <position position="263"/>
    </location>
    <ligand>
        <name>Mn(2+)</name>
        <dbReference type="ChEBI" id="CHEBI:29035"/>
        <label>2</label>
    </ligand>
</feature>
<feature type="binding site" evidence="1">
    <location>
        <position position="268"/>
    </location>
    <ligand>
        <name>Mn(2+)</name>
        <dbReference type="ChEBI" id="CHEBI:29035"/>
        <label>1</label>
    </ligand>
</feature>
<feature type="binding site" evidence="1">
    <location>
        <position position="268"/>
    </location>
    <ligand>
        <name>Mn(2+)</name>
        <dbReference type="ChEBI" id="CHEBI:29035"/>
        <label>2</label>
    </ligand>
</feature>
<feature type="binding site" evidence="1">
    <location>
        <position position="286"/>
    </location>
    <ligand>
        <name>Mn(2+)</name>
        <dbReference type="ChEBI" id="CHEBI:29035"/>
        <label>2</label>
    </ligand>
</feature>
<feature type="binding site" evidence="1">
    <location>
        <position position="345"/>
    </location>
    <ligand>
        <name>Mn(2+)</name>
        <dbReference type="ChEBI" id="CHEBI:29035"/>
        <label>1</label>
    </ligand>
</feature>
<feature type="binding site" evidence="1">
    <location>
        <position position="347"/>
    </location>
    <ligand>
        <name>Mn(2+)</name>
        <dbReference type="ChEBI" id="CHEBI:29035"/>
        <label>1</label>
    </ligand>
</feature>
<feature type="binding site" evidence="1">
    <location>
        <position position="347"/>
    </location>
    <ligand>
        <name>Mn(2+)</name>
        <dbReference type="ChEBI" id="CHEBI:29035"/>
        <label>2</label>
    </ligand>
</feature>
<sequence>MSKRPSISFSEFEVPQKGVAVVLVAKGGGFADEAAKAVGDAEKIARIADISGFTGALGKTAEAIETTPAGVEKIVLVGVGEPGKLGNDDWLKIGGAAFSQIGNAERVTLTLALPETTIAGDEAADVALGMVLRSYKFDRYKTRKSEENGEPKHAAKITICVADTHSARKAFEVAEAVADGVIQARNLVNEPANILGPVEFAEEAEKLEKLGVKVEVLGEKELKKLGMGALLGVAQGSVRPPRLVVMEWHGAKGKEKPIAFVGKGVVFDTGGISIKPAANMEDMKGDMGGAAAVTGLMRALAGRKAKVNAIGVIGLVENMPDGNAQRPGDIVTSMSGQTIEVINTDAEGRLVLADALHYTNDRFKPRFIINLATLTGAVMVALGQYHAGLFSNDDELADQLYDAGQSTGEKLWRLPLGTEYDKMIDSKFADMKNSAGRYGGSITAAQFLKRFVGETPWAHLDVAGTAMGSPANEYNQSWASGFGVRLLDRLVRDQFES</sequence>
<protein>
    <recommendedName>
        <fullName evidence="1">Probable cytosol aminopeptidase</fullName>
        <ecNumber evidence="1">3.4.11.1</ecNumber>
    </recommendedName>
    <alternativeName>
        <fullName evidence="1">Leucine aminopeptidase</fullName>
        <shortName evidence="1">LAP</shortName>
        <ecNumber evidence="1">3.4.11.10</ecNumber>
    </alternativeName>
    <alternativeName>
        <fullName evidence="1">Leucyl aminopeptidase</fullName>
    </alternativeName>
</protein>
<dbReference type="EC" id="3.4.11.1" evidence="1"/>
<dbReference type="EC" id="3.4.11.10" evidence="1"/>
<dbReference type="EMBL" id="CP000708">
    <property type="protein sequence ID" value="ABQ60676.1"/>
    <property type="molecule type" value="Genomic_DNA"/>
</dbReference>
<dbReference type="RefSeq" id="WP_006012040.1">
    <property type="nucleotide sequence ID" value="NC_009505.1"/>
</dbReference>
<dbReference type="SMR" id="A5VPM3"/>
<dbReference type="GeneID" id="45124136"/>
<dbReference type="KEGG" id="bov:BOV_0680"/>
<dbReference type="HOGENOM" id="CLU_013734_6_0_5"/>
<dbReference type="Proteomes" id="UP000006383">
    <property type="component" value="Chromosome I"/>
</dbReference>
<dbReference type="GO" id="GO:0005737">
    <property type="term" value="C:cytoplasm"/>
    <property type="evidence" value="ECO:0007669"/>
    <property type="project" value="UniProtKB-SubCell"/>
</dbReference>
<dbReference type="GO" id="GO:0030145">
    <property type="term" value="F:manganese ion binding"/>
    <property type="evidence" value="ECO:0007669"/>
    <property type="project" value="UniProtKB-UniRule"/>
</dbReference>
<dbReference type="GO" id="GO:0070006">
    <property type="term" value="F:metalloaminopeptidase activity"/>
    <property type="evidence" value="ECO:0007669"/>
    <property type="project" value="InterPro"/>
</dbReference>
<dbReference type="GO" id="GO:0006508">
    <property type="term" value="P:proteolysis"/>
    <property type="evidence" value="ECO:0007669"/>
    <property type="project" value="UniProtKB-KW"/>
</dbReference>
<dbReference type="CDD" id="cd00433">
    <property type="entry name" value="Peptidase_M17"/>
    <property type="match status" value="1"/>
</dbReference>
<dbReference type="Gene3D" id="3.40.220.10">
    <property type="entry name" value="Leucine Aminopeptidase, subunit E, domain 1"/>
    <property type="match status" value="1"/>
</dbReference>
<dbReference type="Gene3D" id="3.40.630.10">
    <property type="entry name" value="Zn peptidases"/>
    <property type="match status" value="1"/>
</dbReference>
<dbReference type="HAMAP" id="MF_00181">
    <property type="entry name" value="Cytosol_peptidase_M17"/>
    <property type="match status" value="1"/>
</dbReference>
<dbReference type="InterPro" id="IPR011356">
    <property type="entry name" value="Leucine_aapep/pepB"/>
</dbReference>
<dbReference type="InterPro" id="IPR043472">
    <property type="entry name" value="Macro_dom-like"/>
</dbReference>
<dbReference type="InterPro" id="IPR000819">
    <property type="entry name" value="Peptidase_M17_C"/>
</dbReference>
<dbReference type="InterPro" id="IPR023042">
    <property type="entry name" value="Peptidase_M17_leu_NH2_pept"/>
</dbReference>
<dbReference type="InterPro" id="IPR008283">
    <property type="entry name" value="Peptidase_M17_N"/>
</dbReference>
<dbReference type="NCBIfam" id="NF002073">
    <property type="entry name" value="PRK00913.1-2"/>
    <property type="match status" value="1"/>
</dbReference>
<dbReference type="NCBIfam" id="NF002074">
    <property type="entry name" value="PRK00913.1-4"/>
    <property type="match status" value="1"/>
</dbReference>
<dbReference type="NCBIfam" id="NF002075">
    <property type="entry name" value="PRK00913.2-2"/>
    <property type="match status" value="1"/>
</dbReference>
<dbReference type="NCBIfam" id="NF002077">
    <property type="entry name" value="PRK00913.2-4"/>
    <property type="match status" value="1"/>
</dbReference>
<dbReference type="NCBIfam" id="NF002083">
    <property type="entry name" value="PRK00913.3-5"/>
    <property type="match status" value="1"/>
</dbReference>
<dbReference type="PANTHER" id="PTHR11963:SF23">
    <property type="entry name" value="CYTOSOL AMINOPEPTIDASE"/>
    <property type="match status" value="1"/>
</dbReference>
<dbReference type="PANTHER" id="PTHR11963">
    <property type="entry name" value="LEUCINE AMINOPEPTIDASE-RELATED"/>
    <property type="match status" value="1"/>
</dbReference>
<dbReference type="Pfam" id="PF00883">
    <property type="entry name" value="Peptidase_M17"/>
    <property type="match status" value="1"/>
</dbReference>
<dbReference type="Pfam" id="PF02789">
    <property type="entry name" value="Peptidase_M17_N"/>
    <property type="match status" value="1"/>
</dbReference>
<dbReference type="PRINTS" id="PR00481">
    <property type="entry name" value="LAMNOPPTDASE"/>
</dbReference>
<dbReference type="SUPFAM" id="SSF52949">
    <property type="entry name" value="Macro domain-like"/>
    <property type="match status" value="1"/>
</dbReference>
<dbReference type="SUPFAM" id="SSF53187">
    <property type="entry name" value="Zn-dependent exopeptidases"/>
    <property type="match status" value="1"/>
</dbReference>
<dbReference type="PROSITE" id="PS00631">
    <property type="entry name" value="CYTOSOL_AP"/>
    <property type="match status" value="1"/>
</dbReference>
<name>AMPA_BRUO2</name>
<comment type="function">
    <text evidence="1">Presumably involved in the processing and regular turnover of intracellular proteins. Catalyzes the removal of unsubstituted N-terminal amino acids from various peptides.</text>
</comment>
<comment type="catalytic activity">
    <reaction evidence="1">
        <text>Release of an N-terminal amino acid, Xaa-|-Yaa-, in which Xaa is preferably Leu, but may be other amino acids including Pro although not Arg or Lys, and Yaa may be Pro. Amino acid amides and methyl esters are also readily hydrolyzed, but rates on arylamides are exceedingly low.</text>
        <dbReference type="EC" id="3.4.11.1"/>
    </reaction>
</comment>
<comment type="catalytic activity">
    <reaction evidence="1">
        <text>Release of an N-terminal amino acid, preferentially leucine, but not glutamic or aspartic acids.</text>
        <dbReference type="EC" id="3.4.11.10"/>
    </reaction>
</comment>
<comment type="cofactor">
    <cofactor evidence="1">
        <name>Mn(2+)</name>
        <dbReference type="ChEBI" id="CHEBI:29035"/>
    </cofactor>
    <text evidence="1">Binds 2 manganese ions per subunit.</text>
</comment>
<comment type="subcellular location">
    <subcellularLocation>
        <location evidence="1">Cytoplasm</location>
    </subcellularLocation>
</comment>
<comment type="similarity">
    <text evidence="1">Belongs to the peptidase M17 family.</text>
</comment>
<keyword id="KW-0031">Aminopeptidase</keyword>
<keyword id="KW-0963">Cytoplasm</keyword>
<keyword id="KW-0378">Hydrolase</keyword>
<keyword id="KW-0464">Manganese</keyword>
<keyword id="KW-0479">Metal-binding</keyword>
<keyword id="KW-0645">Protease</keyword>
<gene>
    <name evidence="1" type="primary">pepA</name>
    <name type="ordered locus">BOV_0680</name>
</gene>